<accession>A5CXK9</accession>
<gene>
    <name evidence="1" type="primary">rplV</name>
    <name type="ordered locus">COSY_0174</name>
</gene>
<feature type="chain" id="PRO_1000142324" description="Large ribosomal subunit protein uL22">
    <location>
        <begin position="1"/>
        <end position="110"/>
    </location>
</feature>
<comment type="function">
    <text evidence="1">This protein binds specifically to 23S rRNA; its binding is stimulated by other ribosomal proteins, e.g. L4, L17, and L20. It is important during the early stages of 50S assembly. It makes multiple contacts with different domains of the 23S rRNA in the assembled 50S subunit and ribosome (By similarity).</text>
</comment>
<comment type="function">
    <text evidence="1">The globular domain of the protein is located near the polypeptide exit tunnel on the outside of the subunit, while an extended beta-hairpin is found that lines the wall of the exit tunnel in the center of the 70S ribosome.</text>
</comment>
<comment type="subunit">
    <text evidence="1">Part of the 50S ribosomal subunit.</text>
</comment>
<comment type="similarity">
    <text evidence="1">Belongs to the universal ribosomal protein uL22 family.</text>
</comment>
<sequence>MKEVKAVHKYAKTSAFKARLVADQIRLKSVEEALNILSFSNKKAAVLVKKVLNSVISNAEHNDGLDIDELFVTSIYIDEGSTMKRIRPRAKGRANRILKRTSHITVGIGK</sequence>
<keyword id="KW-1185">Reference proteome</keyword>
<keyword id="KW-0687">Ribonucleoprotein</keyword>
<keyword id="KW-0689">Ribosomal protein</keyword>
<keyword id="KW-0694">RNA-binding</keyword>
<keyword id="KW-0699">rRNA-binding</keyword>
<organism>
    <name type="scientific">Vesicomyosocius okutanii subsp. Calyptogena okutanii (strain HA)</name>
    <dbReference type="NCBI Taxonomy" id="412965"/>
    <lineage>
        <taxon>Bacteria</taxon>
        <taxon>Pseudomonadati</taxon>
        <taxon>Pseudomonadota</taxon>
        <taxon>Gammaproteobacteria</taxon>
        <taxon>Candidatus Pseudothioglobaceae</taxon>
        <taxon>Candidatus Vesicomyosocius</taxon>
    </lineage>
</organism>
<proteinExistence type="inferred from homology"/>
<reference key="1">
    <citation type="journal article" date="2007" name="Curr. Biol.">
        <title>Reduced genome of the thioautotrophic intracellular symbiont in a deep-sea clam, Calyptogena okutanii.</title>
        <authorList>
            <person name="Kuwahara H."/>
            <person name="Yoshida T."/>
            <person name="Takaki Y."/>
            <person name="Shimamura S."/>
            <person name="Nishi S."/>
            <person name="Harada M."/>
            <person name="Matsuyama K."/>
            <person name="Takishita K."/>
            <person name="Kawato M."/>
            <person name="Uematsu K."/>
            <person name="Fujiwara Y."/>
            <person name="Sato T."/>
            <person name="Kato C."/>
            <person name="Kitagawa M."/>
            <person name="Kato I."/>
            <person name="Maruyama T."/>
        </authorList>
    </citation>
    <scope>NUCLEOTIDE SEQUENCE [LARGE SCALE GENOMIC DNA]</scope>
    <source>
        <strain>HA</strain>
    </source>
</reference>
<protein>
    <recommendedName>
        <fullName evidence="1">Large ribosomal subunit protein uL22</fullName>
    </recommendedName>
    <alternativeName>
        <fullName evidence="2">50S ribosomal protein L22</fullName>
    </alternativeName>
</protein>
<name>RL22_VESOH</name>
<evidence type="ECO:0000255" key="1">
    <source>
        <dbReference type="HAMAP-Rule" id="MF_01331"/>
    </source>
</evidence>
<evidence type="ECO:0000305" key="2"/>
<dbReference type="EMBL" id="AP009247">
    <property type="protein sequence ID" value="BAF61304.1"/>
    <property type="molecule type" value="Genomic_DNA"/>
</dbReference>
<dbReference type="RefSeq" id="WP_011929574.1">
    <property type="nucleotide sequence ID" value="NC_009465.1"/>
</dbReference>
<dbReference type="SMR" id="A5CXK9"/>
<dbReference type="STRING" id="412965.COSY_0174"/>
<dbReference type="KEGG" id="vok:COSY_0174"/>
<dbReference type="eggNOG" id="COG0091">
    <property type="taxonomic scope" value="Bacteria"/>
</dbReference>
<dbReference type="HOGENOM" id="CLU_083987_3_3_6"/>
<dbReference type="OrthoDB" id="9805969at2"/>
<dbReference type="Proteomes" id="UP000000247">
    <property type="component" value="Chromosome"/>
</dbReference>
<dbReference type="GO" id="GO:0022625">
    <property type="term" value="C:cytosolic large ribosomal subunit"/>
    <property type="evidence" value="ECO:0007669"/>
    <property type="project" value="TreeGrafter"/>
</dbReference>
<dbReference type="GO" id="GO:0019843">
    <property type="term" value="F:rRNA binding"/>
    <property type="evidence" value="ECO:0007669"/>
    <property type="project" value="UniProtKB-UniRule"/>
</dbReference>
<dbReference type="GO" id="GO:0003735">
    <property type="term" value="F:structural constituent of ribosome"/>
    <property type="evidence" value="ECO:0007669"/>
    <property type="project" value="InterPro"/>
</dbReference>
<dbReference type="GO" id="GO:0006412">
    <property type="term" value="P:translation"/>
    <property type="evidence" value="ECO:0007669"/>
    <property type="project" value="UniProtKB-UniRule"/>
</dbReference>
<dbReference type="CDD" id="cd00336">
    <property type="entry name" value="Ribosomal_L22"/>
    <property type="match status" value="1"/>
</dbReference>
<dbReference type="FunFam" id="3.90.470.10:FF:000001">
    <property type="entry name" value="50S ribosomal protein L22"/>
    <property type="match status" value="1"/>
</dbReference>
<dbReference type="Gene3D" id="3.90.470.10">
    <property type="entry name" value="Ribosomal protein L22/L17"/>
    <property type="match status" value="1"/>
</dbReference>
<dbReference type="HAMAP" id="MF_01331_B">
    <property type="entry name" value="Ribosomal_uL22_B"/>
    <property type="match status" value="1"/>
</dbReference>
<dbReference type="InterPro" id="IPR001063">
    <property type="entry name" value="Ribosomal_uL22"/>
</dbReference>
<dbReference type="InterPro" id="IPR005727">
    <property type="entry name" value="Ribosomal_uL22_bac/chlpt-type"/>
</dbReference>
<dbReference type="InterPro" id="IPR047867">
    <property type="entry name" value="Ribosomal_uL22_bac/org-type"/>
</dbReference>
<dbReference type="InterPro" id="IPR018260">
    <property type="entry name" value="Ribosomal_uL22_CS"/>
</dbReference>
<dbReference type="InterPro" id="IPR036394">
    <property type="entry name" value="Ribosomal_uL22_sf"/>
</dbReference>
<dbReference type="NCBIfam" id="TIGR01044">
    <property type="entry name" value="rplV_bact"/>
    <property type="match status" value="1"/>
</dbReference>
<dbReference type="PANTHER" id="PTHR13501">
    <property type="entry name" value="CHLOROPLAST 50S RIBOSOMAL PROTEIN L22-RELATED"/>
    <property type="match status" value="1"/>
</dbReference>
<dbReference type="PANTHER" id="PTHR13501:SF8">
    <property type="entry name" value="LARGE RIBOSOMAL SUBUNIT PROTEIN UL22M"/>
    <property type="match status" value="1"/>
</dbReference>
<dbReference type="Pfam" id="PF00237">
    <property type="entry name" value="Ribosomal_L22"/>
    <property type="match status" value="1"/>
</dbReference>
<dbReference type="SUPFAM" id="SSF54843">
    <property type="entry name" value="Ribosomal protein L22"/>
    <property type="match status" value="1"/>
</dbReference>
<dbReference type="PROSITE" id="PS00464">
    <property type="entry name" value="RIBOSOMAL_L22"/>
    <property type="match status" value="1"/>
</dbReference>